<protein>
    <recommendedName>
        <fullName evidence="6">Large ribosomal subunit protein uL3B</fullName>
    </recommendedName>
    <alternativeName>
        <fullName>60S ribosomal protein L3-B</fullName>
    </alternativeName>
    <alternativeName>
        <fullName evidence="5">SP-L1</fullName>
    </alternativeName>
</protein>
<name>RL3B_SCHPO</name>
<accession>P36584</accession>
<keyword id="KW-0963">Cytoplasm</keyword>
<keyword id="KW-0903">Direct protein sequencing</keyword>
<keyword id="KW-1185">Reference proteome</keyword>
<keyword id="KW-0687">Ribonucleoprotein</keyword>
<keyword id="KW-0689">Ribosomal protein</keyword>
<reference key="1">
    <citation type="journal article" date="1994" name="Gene">
        <title>Two genes encoding ribosomal protein L3 of Schizosaccharomyces pombe and their proximal promoter regions.</title>
        <authorList>
            <person name="Liebich I."/>
            <person name="Kohler G."/>
            <person name="Witt I."/>
            <person name="Gross T."/>
            <person name="Kaufer N.F."/>
        </authorList>
    </citation>
    <scope>NUCLEOTIDE SEQUENCE [GENOMIC DNA]</scope>
    <source>
        <strain>972 / ATCC 24843</strain>
    </source>
</reference>
<reference key="2">
    <citation type="journal article" date="2002" name="Nature">
        <title>The genome sequence of Schizosaccharomyces pombe.</title>
        <authorList>
            <person name="Wood V."/>
            <person name="Gwilliam R."/>
            <person name="Rajandream M.A."/>
            <person name="Lyne M.H."/>
            <person name="Lyne R."/>
            <person name="Stewart A."/>
            <person name="Sgouros J.G."/>
            <person name="Peat N."/>
            <person name="Hayles J."/>
            <person name="Baker S.G."/>
            <person name="Basham D."/>
            <person name="Bowman S."/>
            <person name="Brooks K."/>
            <person name="Brown D."/>
            <person name="Brown S."/>
            <person name="Chillingworth T."/>
            <person name="Churcher C.M."/>
            <person name="Collins M."/>
            <person name="Connor R."/>
            <person name="Cronin A."/>
            <person name="Davis P."/>
            <person name="Feltwell T."/>
            <person name="Fraser A."/>
            <person name="Gentles S."/>
            <person name="Goble A."/>
            <person name="Hamlin N."/>
            <person name="Harris D.E."/>
            <person name="Hidalgo J."/>
            <person name="Hodgson G."/>
            <person name="Holroyd S."/>
            <person name="Hornsby T."/>
            <person name="Howarth S."/>
            <person name="Huckle E.J."/>
            <person name="Hunt S."/>
            <person name="Jagels K."/>
            <person name="James K.D."/>
            <person name="Jones L."/>
            <person name="Jones M."/>
            <person name="Leather S."/>
            <person name="McDonald S."/>
            <person name="McLean J."/>
            <person name="Mooney P."/>
            <person name="Moule S."/>
            <person name="Mungall K.L."/>
            <person name="Murphy L.D."/>
            <person name="Niblett D."/>
            <person name="Odell C."/>
            <person name="Oliver K."/>
            <person name="O'Neil S."/>
            <person name="Pearson D."/>
            <person name="Quail M.A."/>
            <person name="Rabbinowitsch E."/>
            <person name="Rutherford K.M."/>
            <person name="Rutter S."/>
            <person name="Saunders D."/>
            <person name="Seeger K."/>
            <person name="Sharp S."/>
            <person name="Skelton J."/>
            <person name="Simmonds M.N."/>
            <person name="Squares R."/>
            <person name="Squares S."/>
            <person name="Stevens K."/>
            <person name="Taylor K."/>
            <person name="Taylor R.G."/>
            <person name="Tivey A."/>
            <person name="Walsh S.V."/>
            <person name="Warren T."/>
            <person name="Whitehead S."/>
            <person name="Woodward J.R."/>
            <person name="Volckaert G."/>
            <person name="Aert R."/>
            <person name="Robben J."/>
            <person name="Grymonprez B."/>
            <person name="Weltjens I."/>
            <person name="Vanstreels E."/>
            <person name="Rieger M."/>
            <person name="Schaefer M."/>
            <person name="Mueller-Auer S."/>
            <person name="Gabel C."/>
            <person name="Fuchs M."/>
            <person name="Duesterhoeft A."/>
            <person name="Fritzc C."/>
            <person name="Holzer E."/>
            <person name="Moestl D."/>
            <person name="Hilbert H."/>
            <person name="Borzym K."/>
            <person name="Langer I."/>
            <person name="Beck A."/>
            <person name="Lehrach H."/>
            <person name="Reinhardt R."/>
            <person name="Pohl T.M."/>
            <person name="Eger P."/>
            <person name="Zimmermann W."/>
            <person name="Wedler H."/>
            <person name="Wambutt R."/>
            <person name="Purnelle B."/>
            <person name="Goffeau A."/>
            <person name="Cadieu E."/>
            <person name="Dreano S."/>
            <person name="Gloux S."/>
            <person name="Lelaure V."/>
            <person name="Mottier S."/>
            <person name="Galibert F."/>
            <person name="Aves S.J."/>
            <person name="Xiang Z."/>
            <person name="Hunt C."/>
            <person name="Moore K."/>
            <person name="Hurst S.M."/>
            <person name="Lucas M."/>
            <person name="Rochet M."/>
            <person name="Gaillardin C."/>
            <person name="Tallada V.A."/>
            <person name="Garzon A."/>
            <person name="Thode G."/>
            <person name="Daga R.R."/>
            <person name="Cruzado L."/>
            <person name="Jimenez J."/>
            <person name="Sanchez M."/>
            <person name="del Rey F."/>
            <person name="Benito J."/>
            <person name="Dominguez A."/>
            <person name="Revuelta J.L."/>
            <person name="Moreno S."/>
            <person name="Armstrong J."/>
            <person name="Forsburg S.L."/>
            <person name="Cerutti L."/>
            <person name="Lowe T."/>
            <person name="McCombie W.R."/>
            <person name="Paulsen I."/>
            <person name="Potashkin J."/>
            <person name="Shpakovski G.V."/>
            <person name="Ussery D."/>
            <person name="Barrell B.G."/>
            <person name="Nurse P."/>
        </authorList>
    </citation>
    <scope>NUCLEOTIDE SEQUENCE [LARGE SCALE GENOMIC DNA]</scope>
    <source>
        <strain>972 / ATCC 24843</strain>
    </source>
</reference>
<reference key="3">
    <citation type="journal article" date="1983" name="Mol. Gen. Genet.">
        <title>Yeast ribosomal proteins: VII. Cytoplasmic ribosomal proteins from Schizosaccharomyces pombe.</title>
        <authorList>
            <person name="Otaka E."/>
            <person name="Higo K."/>
            <person name="Itoh T."/>
        </authorList>
    </citation>
    <scope>PROTEIN SEQUENCE OF 2-20</scope>
</reference>
<reference key="4">
    <citation type="journal article" date="2006" name="Nat. Biotechnol.">
        <title>ORFeome cloning and global analysis of protein localization in the fission yeast Schizosaccharomyces pombe.</title>
        <authorList>
            <person name="Matsuyama A."/>
            <person name="Arai R."/>
            <person name="Yashiroda Y."/>
            <person name="Shirai A."/>
            <person name="Kamata A."/>
            <person name="Sekido S."/>
            <person name="Kobayashi Y."/>
            <person name="Hashimoto A."/>
            <person name="Hamamoto M."/>
            <person name="Hiraoka Y."/>
            <person name="Horinouchi S."/>
            <person name="Yoshida M."/>
        </authorList>
    </citation>
    <scope>SUBCELLULAR LOCATION [LARGE SCALE ANALYSIS]</scope>
</reference>
<evidence type="ECO:0000250" key="1">
    <source>
        <dbReference type="UniProtKB" id="P14126"/>
    </source>
</evidence>
<evidence type="ECO:0000256" key="2">
    <source>
        <dbReference type="SAM" id="MobiDB-lite"/>
    </source>
</evidence>
<evidence type="ECO:0000269" key="3">
    <source>
    </source>
</evidence>
<evidence type="ECO:0000269" key="4">
    <source>
    </source>
</evidence>
<evidence type="ECO:0000303" key="5">
    <source>
    </source>
</evidence>
<evidence type="ECO:0000305" key="6"/>
<organism>
    <name type="scientific">Schizosaccharomyces pombe (strain 972 / ATCC 24843)</name>
    <name type="common">Fission yeast</name>
    <dbReference type="NCBI Taxonomy" id="284812"/>
    <lineage>
        <taxon>Eukaryota</taxon>
        <taxon>Fungi</taxon>
        <taxon>Dikarya</taxon>
        <taxon>Ascomycota</taxon>
        <taxon>Taphrinomycotina</taxon>
        <taxon>Schizosaccharomycetes</taxon>
        <taxon>Schizosaccharomycetales</taxon>
        <taxon>Schizosaccharomycetaceae</taxon>
        <taxon>Schizosaccharomyces</taxon>
    </lineage>
</organism>
<dbReference type="EMBL" id="X57734">
    <property type="protein sequence ID" value="CAA40901.1"/>
    <property type="molecule type" value="Genomic_DNA"/>
</dbReference>
<dbReference type="EMBL" id="CU329670">
    <property type="protein sequence ID" value="CAC37425.1"/>
    <property type="molecule type" value="Genomic_DNA"/>
</dbReference>
<dbReference type="PIR" id="S25592">
    <property type="entry name" value="S25592"/>
</dbReference>
<dbReference type="RefSeq" id="NP_594780.1">
    <property type="nucleotide sequence ID" value="NM_001020208.2"/>
</dbReference>
<dbReference type="SMR" id="P36584"/>
<dbReference type="BioGRID" id="279733">
    <property type="interactions" value="8"/>
</dbReference>
<dbReference type="FunCoup" id="P36584">
    <property type="interactions" value="272"/>
</dbReference>
<dbReference type="STRING" id="284812.P36584"/>
<dbReference type="iPTMnet" id="P36584"/>
<dbReference type="PaxDb" id="4896-SPAPB8E5.06c.1"/>
<dbReference type="EnsemblFungi" id="SPAPB8E5.06c.1">
    <property type="protein sequence ID" value="SPAPB8E5.06c.1:pep"/>
    <property type="gene ID" value="SPAPB8E5.06c"/>
</dbReference>
<dbReference type="GeneID" id="2543309"/>
<dbReference type="KEGG" id="spo:2543309"/>
<dbReference type="PomBase" id="SPAPB8E5.06c">
    <property type="gene designation" value="rpl302"/>
</dbReference>
<dbReference type="VEuPathDB" id="FungiDB:SPAPB8E5.06c"/>
<dbReference type="eggNOG" id="KOG0746">
    <property type="taxonomic scope" value="Eukaryota"/>
</dbReference>
<dbReference type="HOGENOM" id="CLU_033361_2_1_1"/>
<dbReference type="InParanoid" id="P36584"/>
<dbReference type="OMA" id="HVEDGKM"/>
<dbReference type="PhylomeDB" id="P36584"/>
<dbReference type="Reactome" id="R-SPO-156827">
    <property type="pathway name" value="L13a-mediated translational silencing of Ceruloplasmin expression"/>
</dbReference>
<dbReference type="Reactome" id="R-SPO-1799339">
    <property type="pathway name" value="SRP-dependent cotranslational protein targeting to membrane"/>
</dbReference>
<dbReference type="Reactome" id="R-SPO-72689">
    <property type="pathway name" value="Formation of a pool of free 40S subunits"/>
</dbReference>
<dbReference type="Reactome" id="R-SPO-72706">
    <property type="pathway name" value="GTP hydrolysis and joining of the 60S ribosomal subunit"/>
</dbReference>
<dbReference type="Reactome" id="R-SPO-975956">
    <property type="pathway name" value="Nonsense Mediated Decay (NMD) independent of the Exon Junction Complex (EJC)"/>
</dbReference>
<dbReference type="Reactome" id="R-SPO-975957">
    <property type="pathway name" value="Nonsense Mediated Decay (NMD) enhanced by the Exon Junction Complex (EJC)"/>
</dbReference>
<dbReference type="PRO" id="PR:P36584"/>
<dbReference type="Proteomes" id="UP000002485">
    <property type="component" value="Chromosome I"/>
</dbReference>
<dbReference type="GO" id="GO:0005829">
    <property type="term" value="C:cytosol"/>
    <property type="evidence" value="ECO:0007005"/>
    <property type="project" value="PomBase"/>
</dbReference>
<dbReference type="GO" id="GO:0022625">
    <property type="term" value="C:cytosolic large ribosomal subunit"/>
    <property type="evidence" value="ECO:0000318"/>
    <property type="project" value="GO_Central"/>
</dbReference>
<dbReference type="GO" id="GO:0030684">
    <property type="term" value="C:preribosome"/>
    <property type="evidence" value="ECO:0000314"/>
    <property type="project" value="PomBase"/>
</dbReference>
<dbReference type="GO" id="GO:0003723">
    <property type="term" value="F:RNA binding"/>
    <property type="evidence" value="ECO:0000318"/>
    <property type="project" value="GO_Central"/>
</dbReference>
<dbReference type="GO" id="GO:0003735">
    <property type="term" value="F:structural constituent of ribosome"/>
    <property type="evidence" value="ECO:0000318"/>
    <property type="project" value="GO_Central"/>
</dbReference>
<dbReference type="GO" id="GO:0002181">
    <property type="term" value="P:cytoplasmic translation"/>
    <property type="evidence" value="ECO:0000266"/>
    <property type="project" value="PomBase"/>
</dbReference>
<dbReference type="GO" id="GO:0006412">
    <property type="term" value="P:translation"/>
    <property type="evidence" value="ECO:0000318"/>
    <property type="project" value="GO_Central"/>
</dbReference>
<dbReference type="FunFam" id="2.40.30.10:FF:000079">
    <property type="entry name" value="60S ribosomal protein L3"/>
    <property type="match status" value="1"/>
</dbReference>
<dbReference type="FunFam" id="3.30.1430.10:FF:000001">
    <property type="entry name" value="60S ribosomal protein L3"/>
    <property type="match status" value="1"/>
</dbReference>
<dbReference type="FunFam" id="4.10.960.10:FF:000001">
    <property type="entry name" value="60S ribosomal protein L3"/>
    <property type="match status" value="1"/>
</dbReference>
<dbReference type="FunFam" id="4.10.960.10:FF:000002">
    <property type="entry name" value="60S ribosomal protein L3"/>
    <property type="match status" value="1"/>
</dbReference>
<dbReference type="FunFam" id="2.40.30.10:FF:000351">
    <property type="entry name" value="Ribosomal protein L3"/>
    <property type="match status" value="1"/>
</dbReference>
<dbReference type="Gene3D" id="3.30.1430.10">
    <property type="match status" value="1"/>
</dbReference>
<dbReference type="Gene3D" id="4.10.960.10">
    <property type="entry name" value="Ribosomal protein L3, domain 3"/>
    <property type="match status" value="1"/>
</dbReference>
<dbReference type="Gene3D" id="2.40.30.10">
    <property type="entry name" value="Translation factors"/>
    <property type="match status" value="1"/>
</dbReference>
<dbReference type="InterPro" id="IPR045077">
    <property type="entry name" value="L3_arc_euk"/>
</dbReference>
<dbReference type="InterPro" id="IPR044892">
    <property type="entry name" value="Ribosomal_L3_dom_3_arc_sf"/>
</dbReference>
<dbReference type="InterPro" id="IPR000597">
    <property type="entry name" value="Ribosomal_uL3"/>
</dbReference>
<dbReference type="InterPro" id="IPR019926">
    <property type="entry name" value="Ribosomal_uL3_CS"/>
</dbReference>
<dbReference type="InterPro" id="IPR009000">
    <property type="entry name" value="Transl_B-barrel_sf"/>
</dbReference>
<dbReference type="PANTHER" id="PTHR11363">
    <property type="entry name" value="60S RIBOSOMAL PROTEIN L3-RELATED"/>
    <property type="match status" value="1"/>
</dbReference>
<dbReference type="PANTHER" id="PTHR11363:SF5">
    <property type="entry name" value="LARGE RIBOSOMAL SUBUNIT PROTEIN UL3"/>
    <property type="match status" value="1"/>
</dbReference>
<dbReference type="Pfam" id="PF00297">
    <property type="entry name" value="Ribosomal_L3"/>
    <property type="match status" value="1"/>
</dbReference>
<dbReference type="SUPFAM" id="SSF50447">
    <property type="entry name" value="Translation proteins"/>
    <property type="match status" value="1"/>
</dbReference>
<dbReference type="PROSITE" id="PS00474">
    <property type="entry name" value="RIBOSOMAL_L3"/>
    <property type="match status" value="1"/>
</dbReference>
<gene>
    <name type="primary">rpl302</name>
    <name type="synonym">rpl3b</name>
    <name type="ORF">SPAPB8E5.06c</name>
</gene>
<sequence>MSHCKFEQPRHGSLGFLPRKRASRQRGKVKAFPKDDASKPVHLTAFLGYKAGMTHIVRDLDRPGSKMHKREILEAVTIIETPPMVVVGVVGYVETPRGLRSLTTVWAEHLSEEVKRRFYKNWFKSKKKAFTKYAKKYAESTQSINRELERIKKYCSVVRVLAHTQIRKTPLAQKKAHLMEIQVNGGSVADKVEWAREHFEKTVDIKSTFEQNEMIDVIGVTRGKGNEGTTARWGTKRLPRKTHRGLRKVACIGAWHPANVQWTVARAGNAGYMHRTQLNSKIYRIGAGDDAKNASTDFDATEKRITPMGGFVRYGVVENDFVMLNGATPGPVKRVLTLRKSLLTHTSRKALEPVSLKWIDTASKFGHGRFQTPAEAKQFLGTLKKDVA</sequence>
<feature type="initiator methionine" description="Removed" evidence="4">
    <location>
        <position position="1"/>
    </location>
</feature>
<feature type="chain" id="PRO_0000077250" description="Large ribosomal subunit protein uL3B">
    <location>
        <begin position="2"/>
        <end position="388"/>
    </location>
</feature>
<feature type="region of interest" description="Disordered" evidence="2">
    <location>
        <begin position="1"/>
        <end position="34"/>
    </location>
</feature>
<feature type="compositionally biased region" description="Basic and acidic residues" evidence="2">
    <location>
        <begin position="1"/>
        <end position="10"/>
    </location>
</feature>
<feature type="compositionally biased region" description="Basic residues" evidence="2">
    <location>
        <begin position="18"/>
        <end position="31"/>
    </location>
</feature>
<comment type="function">
    <text evidence="1">Component of the ribosome, a large ribonucleoprotein complex responsible for the synthesis of proteins in the cell. The small ribosomal subunit (SSU) binds messenger RNAs (mRNAs) and translates the encoded message by selecting cognate aminoacyl-transfer RNA (tRNA) molecules. The large subunit (LSU) contains the ribosomal catalytic site termed the peptidyl transferase center (PTC), which catalyzes the formation of peptide bonds, thereby polymerizing the amino acids delivered by tRNAs into a polypeptide chain. The nascent polypeptides leave the ribosome through a tunnel in the LSU and interact with protein factors that function in enzymatic processing, targeting, and the membrane insertion of nascent chains at the exit of the ribosomal tunnel. uL3 plays a role in coordinating processes of accommodating the aminoacyl-tRNA in the PTC.</text>
</comment>
<comment type="subunit">
    <text evidence="1">Component of the large ribosomal subunit (LSU). Mature yeast ribosomes consist of a small (40S) and a large (60S) subunit. The 40S small subunit contains 1 molecule of ribosomal RNA (18S rRNA) and at least 33 different proteins. The large 60S subunit contains 3 rRNA molecules (25S, 5.8S and 5S rRNA) and at least 46 different proteins. uL3 forms together with ES39L one of the contact sites for the signal recognition particle that targets ribosomes to the endoplasmic reticulum membrane.</text>
</comment>
<comment type="subcellular location">
    <subcellularLocation>
        <location evidence="3">Cytoplasm</location>
    </subcellularLocation>
</comment>
<comment type="miscellaneous">
    <text>There are 2 genes for uL3 in S.pombe.</text>
</comment>
<comment type="similarity">
    <text evidence="6">Belongs to the universal ribosomal protein uL3 family.</text>
</comment>
<proteinExistence type="evidence at protein level"/>